<keyword id="KW-0472">Membrane</keyword>
<keyword id="KW-1185">Reference proteome</keyword>
<keyword id="KW-0812">Transmembrane</keyword>
<keyword id="KW-1133">Transmembrane helix</keyword>
<name>Y5632_DICDI</name>
<accession>Q54LA2</accession>
<gene>
    <name type="ORF">DDB_G0286783</name>
</gene>
<organism>
    <name type="scientific">Dictyostelium discoideum</name>
    <name type="common">Social amoeba</name>
    <dbReference type="NCBI Taxonomy" id="44689"/>
    <lineage>
        <taxon>Eukaryota</taxon>
        <taxon>Amoebozoa</taxon>
        <taxon>Evosea</taxon>
        <taxon>Eumycetozoa</taxon>
        <taxon>Dictyostelia</taxon>
        <taxon>Dictyosteliales</taxon>
        <taxon>Dictyosteliaceae</taxon>
        <taxon>Dictyostelium</taxon>
    </lineage>
</organism>
<reference key="1">
    <citation type="journal article" date="2005" name="Nature">
        <title>The genome of the social amoeba Dictyostelium discoideum.</title>
        <authorList>
            <person name="Eichinger L."/>
            <person name="Pachebat J.A."/>
            <person name="Gloeckner G."/>
            <person name="Rajandream M.A."/>
            <person name="Sucgang R."/>
            <person name="Berriman M."/>
            <person name="Song J."/>
            <person name="Olsen R."/>
            <person name="Szafranski K."/>
            <person name="Xu Q."/>
            <person name="Tunggal B."/>
            <person name="Kummerfeld S."/>
            <person name="Madera M."/>
            <person name="Konfortov B.A."/>
            <person name="Rivero F."/>
            <person name="Bankier A.T."/>
            <person name="Lehmann R."/>
            <person name="Hamlin N."/>
            <person name="Davies R."/>
            <person name="Gaudet P."/>
            <person name="Fey P."/>
            <person name="Pilcher K."/>
            <person name="Chen G."/>
            <person name="Saunders D."/>
            <person name="Sodergren E.J."/>
            <person name="Davis P."/>
            <person name="Kerhornou A."/>
            <person name="Nie X."/>
            <person name="Hall N."/>
            <person name="Anjard C."/>
            <person name="Hemphill L."/>
            <person name="Bason N."/>
            <person name="Farbrother P."/>
            <person name="Desany B."/>
            <person name="Just E."/>
            <person name="Morio T."/>
            <person name="Rost R."/>
            <person name="Churcher C.M."/>
            <person name="Cooper J."/>
            <person name="Haydock S."/>
            <person name="van Driessche N."/>
            <person name="Cronin A."/>
            <person name="Goodhead I."/>
            <person name="Muzny D.M."/>
            <person name="Mourier T."/>
            <person name="Pain A."/>
            <person name="Lu M."/>
            <person name="Harper D."/>
            <person name="Lindsay R."/>
            <person name="Hauser H."/>
            <person name="James K.D."/>
            <person name="Quiles M."/>
            <person name="Madan Babu M."/>
            <person name="Saito T."/>
            <person name="Buchrieser C."/>
            <person name="Wardroper A."/>
            <person name="Felder M."/>
            <person name="Thangavelu M."/>
            <person name="Johnson D."/>
            <person name="Knights A."/>
            <person name="Loulseged H."/>
            <person name="Mungall K.L."/>
            <person name="Oliver K."/>
            <person name="Price C."/>
            <person name="Quail M.A."/>
            <person name="Urushihara H."/>
            <person name="Hernandez J."/>
            <person name="Rabbinowitsch E."/>
            <person name="Steffen D."/>
            <person name="Sanders M."/>
            <person name="Ma J."/>
            <person name="Kohara Y."/>
            <person name="Sharp S."/>
            <person name="Simmonds M.N."/>
            <person name="Spiegler S."/>
            <person name="Tivey A."/>
            <person name="Sugano S."/>
            <person name="White B."/>
            <person name="Walker D."/>
            <person name="Woodward J.R."/>
            <person name="Winckler T."/>
            <person name="Tanaka Y."/>
            <person name="Shaulsky G."/>
            <person name="Schleicher M."/>
            <person name="Weinstock G.M."/>
            <person name="Rosenthal A."/>
            <person name="Cox E.C."/>
            <person name="Chisholm R.L."/>
            <person name="Gibbs R.A."/>
            <person name="Loomis W.F."/>
            <person name="Platzer M."/>
            <person name="Kay R.R."/>
            <person name="Williams J.G."/>
            <person name="Dear P.H."/>
            <person name="Noegel A.A."/>
            <person name="Barrell B.G."/>
            <person name="Kuspa A."/>
        </authorList>
    </citation>
    <scope>NUCLEOTIDE SEQUENCE [LARGE SCALE GENOMIC DNA]</scope>
    <source>
        <strain>AX4</strain>
    </source>
</reference>
<evidence type="ECO:0000255" key="1"/>
<evidence type="ECO:0000305" key="2"/>
<feature type="chain" id="PRO_0000348487" description="Uncharacterized transmembrane protein DDB_G0286783">
    <location>
        <begin position="1"/>
        <end position="42"/>
    </location>
</feature>
<feature type="transmembrane region" description="Helical" evidence="1">
    <location>
        <begin position="15"/>
        <end position="35"/>
    </location>
</feature>
<proteinExistence type="predicted"/>
<protein>
    <recommendedName>
        <fullName>Uncharacterized transmembrane protein DDB_G0286783</fullName>
    </recommendedName>
</protein>
<sequence length="42" mass="5272">MCIFFFFKKLFFVEINVCLSFFFLFYFIFVLFFAAEVRNNDF</sequence>
<dbReference type="EMBL" id="AAFI02000089">
    <property type="protein sequence ID" value="EAL64147.1"/>
    <property type="molecule type" value="Genomic_DNA"/>
</dbReference>
<dbReference type="RefSeq" id="XP_637659.1">
    <property type="nucleotide sequence ID" value="XM_632567.1"/>
</dbReference>
<dbReference type="SMR" id="Q54LA2"/>
<dbReference type="PaxDb" id="44689-DDB0215632"/>
<dbReference type="EnsemblProtists" id="EAL64147">
    <property type="protein sequence ID" value="EAL64147"/>
    <property type="gene ID" value="DDB_G0286783"/>
</dbReference>
<dbReference type="GeneID" id="8625799"/>
<dbReference type="KEGG" id="ddi:DDB_G0286783"/>
<dbReference type="dictyBase" id="DDB_G0286783"/>
<dbReference type="HOGENOM" id="CLU_3261625_0_0_1"/>
<dbReference type="InParanoid" id="Q54LA2"/>
<dbReference type="PRO" id="PR:Q54LA2"/>
<dbReference type="Proteomes" id="UP000002195">
    <property type="component" value="Chromosome 4"/>
</dbReference>
<dbReference type="GO" id="GO:0016020">
    <property type="term" value="C:membrane"/>
    <property type="evidence" value="ECO:0007669"/>
    <property type="project" value="UniProtKB-SubCell"/>
</dbReference>
<comment type="subcellular location">
    <subcellularLocation>
        <location evidence="2">Membrane</location>
        <topology evidence="2">Single-pass membrane protein</topology>
    </subcellularLocation>
</comment>